<protein>
    <recommendedName>
        <fullName evidence="1">Biosynthetic peptidoglycan transglycosylase</fullName>
        <ecNumber evidence="1">2.4.99.28</ecNumber>
    </recommendedName>
    <alternativeName>
        <fullName evidence="1">Glycan polymerase</fullName>
    </alternativeName>
    <alternativeName>
        <fullName evidence="1">Peptidoglycan glycosyltransferase MtgA</fullName>
        <shortName evidence="1">PGT</shortName>
    </alternativeName>
</protein>
<name>MTGA_ECO8A</name>
<proteinExistence type="inferred from homology"/>
<keyword id="KW-0997">Cell inner membrane</keyword>
<keyword id="KW-1003">Cell membrane</keyword>
<keyword id="KW-0133">Cell shape</keyword>
<keyword id="KW-0961">Cell wall biogenesis/degradation</keyword>
<keyword id="KW-0328">Glycosyltransferase</keyword>
<keyword id="KW-0472">Membrane</keyword>
<keyword id="KW-0573">Peptidoglycan synthesis</keyword>
<keyword id="KW-0808">Transferase</keyword>
<keyword id="KW-0812">Transmembrane</keyword>
<keyword id="KW-1133">Transmembrane helix</keyword>
<comment type="function">
    <text evidence="1">Peptidoglycan polymerase that catalyzes glycan chain elongation from lipid-linked precursors.</text>
</comment>
<comment type="catalytic activity">
    <reaction evidence="1">
        <text>[GlcNAc-(1-&gt;4)-Mur2Ac(oyl-L-Ala-gamma-D-Glu-L-Lys-D-Ala-D-Ala)](n)-di-trans,octa-cis-undecaprenyl diphosphate + beta-D-GlcNAc-(1-&gt;4)-Mur2Ac(oyl-L-Ala-gamma-D-Glu-L-Lys-D-Ala-D-Ala)-di-trans,octa-cis-undecaprenyl diphosphate = [GlcNAc-(1-&gt;4)-Mur2Ac(oyl-L-Ala-gamma-D-Glu-L-Lys-D-Ala-D-Ala)](n+1)-di-trans,octa-cis-undecaprenyl diphosphate + di-trans,octa-cis-undecaprenyl diphosphate + H(+)</text>
        <dbReference type="Rhea" id="RHEA:23708"/>
        <dbReference type="Rhea" id="RHEA-COMP:9602"/>
        <dbReference type="Rhea" id="RHEA-COMP:9603"/>
        <dbReference type="ChEBI" id="CHEBI:15378"/>
        <dbReference type="ChEBI" id="CHEBI:58405"/>
        <dbReference type="ChEBI" id="CHEBI:60033"/>
        <dbReference type="ChEBI" id="CHEBI:78435"/>
        <dbReference type="EC" id="2.4.99.28"/>
    </reaction>
</comment>
<comment type="pathway">
    <text evidence="1">Cell wall biogenesis; peptidoglycan biosynthesis.</text>
</comment>
<comment type="subcellular location">
    <subcellularLocation>
        <location evidence="1">Cell inner membrane</location>
        <topology evidence="1">Single-pass membrane protein</topology>
    </subcellularLocation>
</comment>
<comment type="similarity">
    <text evidence="1">Belongs to the glycosyltransferase 51 family.</text>
</comment>
<dbReference type="EC" id="2.4.99.28" evidence="1"/>
<dbReference type="EMBL" id="CU928160">
    <property type="protein sequence ID" value="CAR00170.1"/>
    <property type="molecule type" value="Genomic_DNA"/>
</dbReference>
<dbReference type="RefSeq" id="WP_000047091.1">
    <property type="nucleotide sequence ID" value="NC_011741.1"/>
</dbReference>
<dbReference type="SMR" id="B7M0S6"/>
<dbReference type="CAZy" id="GT51">
    <property type="family name" value="Glycosyltransferase Family 51"/>
</dbReference>
<dbReference type="GeneID" id="75206064"/>
<dbReference type="KEGG" id="ecr:ECIAI1_3356"/>
<dbReference type="HOGENOM" id="CLU_006354_1_1_6"/>
<dbReference type="UniPathway" id="UPA00219"/>
<dbReference type="GO" id="GO:0009274">
    <property type="term" value="C:peptidoglycan-based cell wall"/>
    <property type="evidence" value="ECO:0007669"/>
    <property type="project" value="InterPro"/>
</dbReference>
<dbReference type="GO" id="GO:0005886">
    <property type="term" value="C:plasma membrane"/>
    <property type="evidence" value="ECO:0007669"/>
    <property type="project" value="UniProtKB-SubCell"/>
</dbReference>
<dbReference type="GO" id="GO:0016763">
    <property type="term" value="F:pentosyltransferase activity"/>
    <property type="evidence" value="ECO:0007669"/>
    <property type="project" value="InterPro"/>
</dbReference>
<dbReference type="GO" id="GO:0008955">
    <property type="term" value="F:peptidoglycan glycosyltransferase activity"/>
    <property type="evidence" value="ECO:0007669"/>
    <property type="project" value="UniProtKB-UniRule"/>
</dbReference>
<dbReference type="GO" id="GO:0071555">
    <property type="term" value="P:cell wall organization"/>
    <property type="evidence" value="ECO:0007669"/>
    <property type="project" value="UniProtKB-KW"/>
</dbReference>
<dbReference type="GO" id="GO:0009252">
    <property type="term" value="P:peptidoglycan biosynthetic process"/>
    <property type="evidence" value="ECO:0007669"/>
    <property type="project" value="UniProtKB-UniRule"/>
</dbReference>
<dbReference type="GO" id="GO:0008360">
    <property type="term" value="P:regulation of cell shape"/>
    <property type="evidence" value="ECO:0007669"/>
    <property type="project" value="UniProtKB-KW"/>
</dbReference>
<dbReference type="FunFam" id="1.10.3810.10:FF:000004">
    <property type="entry name" value="Biosynthetic peptidoglycan transglycosylase"/>
    <property type="match status" value="1"/>
</dbReference>
<dbReference type="Gene3D" id="1.10.3810.10">
    <property type="entry name" value="Biosynthetic peptidoglycan transglycosylase-like"/>
    <property type="match status" value="1"/>
</dbReference>
<dbReference type="HAMAP" id="MF_00766">
    <property type="entry name" value="PGT_MtgA"/>
    <property type="match status" value="1"/>
</dbReference>
<dbReference type="InterPro" id="IPR001264">
    <property type="entry name" value="Glyco_trans_51"/>
</dbReference>
<dbReference type="InterPro" id="IPR023346">
    <property type="entry name" value="Lysozyme-like_dom_sf"/>
</dbReference>
<dbReference type="InterPro" id="IPR036950">
    <property type="entry name" value="PBP_transglycosylase"/>
</dbReference>
<dbReference type="InterPro" id="IPR011812">
    <property type="entry name" value="Pep_trsgly"/>
</dbReference>
<dbReference type="NCBIfam" id="TIGR02070">
    <property type="entry name" value="mono_pep_trsgly"/>
    <property type="match status" value="1"/>
</dbReference>
<dbReference type="PANTHER" id="PTHR30400:SF0">
    <property type="entry name" value="BIOSYNTHETIC PEPTIDOGLYCAN TRANSGLYCOSYLASE"/>
    <property type="match status" value="1"/>
</dbReference>
<dbReference type="PANTHER" id="PTHR30400">
    <property type="entry name" value="MONOFUNCTIONAL BIOSYNTHETIC PEPTIDOGLYCAN TRANSGLYCOSYLASE"/>
    <property type="match status" value="1"/>
</dbReference>
<dbReference type="Pfam" id="PF00912">
    <property type="entry name" value="Transgly"/>
    <property type="match status" value="1"/>
</dbReference>
<dbReference type="SUPFAM" id="SSF53955">
    <property type="entry name" value="Lysozyme-like"/>
    <property type="match status" value="1"/>
</dbReference>
<feature type="chain" id="PRO_1000133593" description="Biosynthetic peptidoglycan transglycosylase">
    <location>
        <begin position="1"/>
        <end position="242"/>
    </location>
</feature>
<feature type="transmembrane region" description="Helical" evidence="1">
    <location>
        <begin position="19"/>
        <end position="39"/>
    </location>
</feature>
<accession>B7M0S6</accession>
<evidence type="ECO:0000255" key="1">
    <source>
        <dbReference type="HAMAP-Rule" id="MF_00766"/>
    </source>
</evidence>
<organism>
    <name type="scientific">Escherichia coli O8 (strain IAI1)</name>
    <dbReference type="NCBI Taxonomy" id="585034"/>
    <lineage>
        <taxon>Bacteria</taxon>
        <taxon>Pseudomonadati</taxon>
        <taxon>Pseudomonadota</taxon>
        <taxon>Gammaproteobacteria</taxon>
        <taxon>Enterobacterales</taxon>
        <taxon>Enterobacteriaceae</taxon>
        <taxon>Escherichia</taxon>
    </lineage>
</organism>
<sequence length="242" mass="27342">MSKSRLTVFSFVRRFLLRLMVVLAVFWGGGIALFSVAPVPFSAVMVERQVSAWLHGNFRYVAHSDWVSMDQISPWMGLAVIAAEDQKFPEHWGFDVASIEKALAHNERNENRIRGASTISQQTAKNLFLWDGRSWVRKGLEAGLTLGIETVWSKKRILTVYLNIAEFGDGVFGVEAAAQRYFHKPASKLTRSEAALLAAVLPNPLRFKVSSPSGYVRSRQAWILRQMYQLGGEPFMQQHQLD</sequence>
<gene>
    <name evidence="1" type="primary">mtgA</name>
    <name type="ordered locus">ECIAI1_3356</name>
</gene>
<reference key="1">
    <citation type="journal article" date="2009" name="PLoS Genet.">
        <title>Organised genome dynamics in the Escherichia coli species results in highly diverse adaptive paths.</title>
        <authorList>
            <person name="Touchon M."/>
            <person name="Hoede C."/>
            <person name="Tenaillon O."/>
            <person name="Barbe V."/>
            <person name="Baeriswyl S."/>
            <person name="Bidet P."/>
            <person name="Bingen E."/>
            <person name="Bonacorsi S."/>
            <person name="Bouchier C."/>
            <person name="Bouvet O."/>
            <person name="Calteau A."/>
            <person name="Chiapello H."/>
            <person name="Clermont O."/>
            <person name="Cruveiller S."/>
            <person name="Danchin A."/>
            <person name="Diard M."/>
            <person name="Dossat C."/>
            <person name="Karoui M.E."/>
            <person name="Frapy E."/>
            <person name="Garry L."/>
            <person name="Ghigo J.M."/>
            <person name="Gilles A.M."/>
            <person name="Johnson J."/>
            <person name="Le Bouguenec C."/>
            <person name="Lescat M."/>
            <person name="Mangenot S."/>
            <person name="Martinez-Jehanne V."/>
            <person name="Matic I."/>
            <person name="Nassif X."/>
            <person name="Oztas S."/>
            <person name="Petit M.A."/>
            <person name="Pichon C."/>
            <person name="Rouy Z."/>
            <person name="Ruf C.S."/>
            <person name="Schneider D."/>
            <person name="Tourret J."/>
            <person name="Vacherie B."/>
            <person name="Vallenet D."/>
            <person name="Medigue C."/>
            <person name="Rocha E.P.C."/>
            <person name="Denamur E."/>
        </authorList>
    </citation>
    <scope>NUCLEOTIDE SEQUENCE [LARGE SCALE GENOMIC DNA]</scope>
    <source>
        <strain>IAI1</strain>
    </source>
</reference>